<evidence type="ECO:0007829" key="1">
    <source>
        <dbReference type="PDB" id="2B0A"/>
    </source>
</evidence>
<name>Y783_METJA</name>
<feature type="chain" id="PRO_0000107034" description="Uncharacterized protein MJ0783">
    <location>
        <begin position="1"/>
        <end position="186"/>
    </location>
</feature>
<feature type="strand" evidence="1">
    <location>
        <begin position="3"/>
        <end position="5"/>
    </location>
</feature>
<feature type="strand" evidence="1">
    <location>
        <begin position="22"/>
        <end position="28"/>
    </location>
</feature>
<feature type="strand" evidence="1">
    <location>
        <begin position="31"/>
        <end position="37"/>
    </location>
</feature>
<feature type="strand" evidence="1">
    <location>
        <begin position="42"/>
        <end position="47"/>
    </location>
</feature>
<feature type="helix" evidence="1">
    <location>
        <begin position="49"/>
        <end position="52"/>
    </location>
</feature>
<feature type="helix" evidence="1">
    <location>
        <begin position="61"/>
        <end position="63"/>
    </location>
</feature>
<feature type="strand" evidence="1">
    <location>
        <begin position="65"/>
        <end position="73"/>
    </location>
</feature>
<feature type="turn" evidence="1">
    <location>
        <begin position="74"/>
        <end position="76"/>
    </location>
</feature>
<feature type="strand" evidence="1">
    <location>
        <begin position="86"/>
        <end position="91"/>
    </location>
</feature>
<feature type="helix" evidence="1">
    <location>
        <begin position="94"/>
        <end position="97"/>
    </location>
</feature>
<feature type="helix" evidence="1">
    <location>
        <begin position="101"/>
        <end position="105"/>
    </location>
</feature>
<feature type="helix" evidence="1">
    <location>
        <begin position="113"/>
        <end position="118"/>
    </location>
</feature>
<feature type="strand" evidence="1">
    <location>
        <begin position="123"/>
        <end position="129"/>
    </location>
</feature>
<feature type="strand" evidence="1">
    <location>
        <begin position="131"/>
        <end position="133"/>
    </location>
</feature>
<feature type="helix" evidence="1">
    <location>
        <begin position="134"/>
        <end position="142"/>
    </location>
</feature>
<feature type="strand" evidence="1">
    <location>
        <begin position="146"/>
        <end position="149"/>
    </location>
</feature>
<feature type="helix" evidence="1">
    <location>
        <begin position="153"/>
        <end position="158"/>
    </location>
</feature>
<feature type="strand" evidence="1">
    <location>
        <begin position="162"/>
        <end position="169"/>
    </location>
</feature>
<feature type="strand" evidence="1">
    <location>
        <begin position="176"/>
        <end position="185"/>
    </location>
</feature>
<sequence length="186" mass="21238">MEILDLTQTLINFPYPGDPELRIIEKKIDGFIVSEIIMGSHLCTHIDYPKHVGLENRIPFKDGIIKGKGYCISLDDFERNKLPACDILLIYTGFSKYWGRDEYFEKIPEIPFLDDIIKSNIKCVGIDACTIGGFEEHKRLLSNNILIIENLNENLKNLVGKSFYFLGLPLKIFDIDASPIRCIAIL</sequence>
<dbReference type="EMBL" id="L77117">
    <property type="protein sequence ID" value="AAB98780.1"/>
    <property type="molecule type" value="Genomic_DNA"/>
</dbReference>
<dbReference type="PIR" id="G64397">
    <property type="entry name" value="G64397"/>
</dbReference>
<dbReference type="RefSeq" id="WP_010870289.1">
    <property type="nucleotide sequence ID" value="NC_000909.1"/>
</dbReference>
<dbReference type="PDB" id="2B0A">
    <property type="method" value="X-ray"/>
    <property type="resolution" value="1.45 A"/>
    <property type="chains" value="A=2-186"/>
</dbReference>
<dbReference type="PDBsum" id="2B0A"/>
<dbReference type="SMR" id="Q58193"/>
<dbReference type="STRING" id="243232.MJ_0783"/>
<dbReference type="PaxDb" id="243232-MJ_0783"/>
<dbReference type="DNASU" id="1451661"/>
<dbReference type="EnsemblBacteria" id="AAB98780">
    <property type="protein sequence ID" value="AAB98780"/>
    <property type="gene ID" value="MJ_0783"/>
</dbReference>
<dbReference type="GeneID" id="1451661"/>
<dbReference type="KEGG" id="mja:MJ_0783"/>
<dbReference type="eggNOG" id="arCOG02462">
    <property type="taxonomic scope" value="Archaea"/>
</dbReference>
<dbReference type="HOGENOM" id="CLU_030671_3_2_2"/>
<dbReference type="InParanoid" id="Q58193"/>
<dbReference type="OrthoDB" id="9014at2157"/>
<dbReference type="PhylomeDB" id="Q58193"/>
<dbReference type="EvolutionaryTrace" id="Q58193"/>
<dbReference type="Proteomes" id="UP000000805">
    <property type="component" value="Chromosome"/>
</dbReference>
<dbReference type="GO" id="GO:0004061">
    <property type="term" value="F:arylformamidase activity"/>
    <property type="evidence" value="ECO:0000318"/>
    <property type="project" value="GO_Central"/>
</dbReference>
<dbReference type="GO" id="GO:0019441">
    <property type="term" value="P:L-tryptophan catabolic process to kynurenine"/>
    <property type="evidence" value="ECO:0000318"/>
    <property type="project" value="GO_Central"/>
</dbReference>
<dbReference type="Gene3D" id="3.50.30.50">
    <property type="entry name" value="Putative cyclase"/>
    <property type="match status" value="1"/>
</dbReference>
<dbReference type="InterPro" id="IPR007325">
    <property type="entry name" value="KFase/CYL"/>
</dbReference>
<dbReference type="InterPro" id="IPR037175">
    <property type="entry name" value="KFase_sf"/>
</dbReference>
<dbReference type="PANTHER" id="PTHR31118">
    <property type="entry name" value="CYCLASE-LIKE PROTEIN 2"/>
    <property type="match status" value="1"/>
</dbReference>
<dbReference type="PANTHER" id="PTHR31118:SF12">
    <property type="entry name" value="CYCLASE-LIKE PROTEIN 2"/>
    <property type="match status" value="1"/>
</dbReference>
<dbReference type="Pfam" id="PF04199">
    <property type="entry name" value="Cyclase"/>
    <property type="match status" value="1"/>
</dbReference>
<dbReference type="SUPFAM" id="SSF102198">
    <property type="entry name" value="Putative cyclase"/>
    <property type="match status" value="1"/>
</dbReference>
<protein>
    <recommendedName>
        <fullName>Uncharacterized protein MJ0783</fullName>
    </recommendedName>
</protein>
<organism>
    <name type="scientific">Methanocaldococcus jannaschii (strain ATCC 43067 / DSM 2661 / JAL-1 / JCM 10045 / NBRC 100440)</name>
    <name type="common">Methanococcus jannaschii</name>
    <dbReference type="NCBI Taxonomy" id="243232"/>
    <lineage>
        <taxon>Archaea</taxon>
        <taxon>Methanobacteriati</taxon>
        <taxon>Methanobacteriota</taxon>
        <taxon>Methanomada group</taxon>
        <taxon>Methanococci</taxon>
        <taxon>Methanococcales</taxon>
        <taxon>Methanocaldococcaceae</taxon>
        <taxon>Methanocaldococcus</taxon>
    </lineage>
</organism>
<reference key="1">
    <citation type="journal article" date="1996" name="Science">
        <title>Complete genome sequence of the methanogenic archaeon, Methanococcus jannaschii.</title>
        <authorList>
            <person name="Bult C.J."/>
            <person name="White O."/>
            <person name="Olsen G.J."/>
            <person name="Zhou L."/>
            <person name="Fleischmann R.D."/>
            <person name="Sutton G.G."/>
            <person name="Blake J.A."/>
            <person name="FitzGerald L.M."/>
            <person name="Clayton R.A."/>
            <person name="Gocayne J.D."/>
            <person name="Kerlavage A.R."/>
            <person name="Dougherty B.A."/>
            <person name="Tomb J.-F."/>
            <person name="Adams M.D."/>
            <person name="Reich C.I."/>
            <person name="Overbeek R."/>
            <person name="Kirkness E.F."/>
            <person name="Weinstock K.G."/>
            <person name="Merrick J.M."/>
            <person name="Glodek A."/>
            <person name="Scott J.L."/>
            <person name="Geoghagen N.S.M."/>
            <person name="Weidman J.F."/>
            <person name="Fuhrmann J.L."/>
            <person name="Nguyen D."/>
            <person name="Utterback T.R."/>
            <person name="Kelley J.M."/>
            <person name="Peterson J.D."/>
            <person name="Sadow P.W."/>
            <person name="Hanna M.C."/>
            <person name="Cotton M.D."/>
            <person name="Roberts K.M."/>
            <person name="Hurst M.A."/>
            <person name="Kaine B.P."/>
            <person name="Borodovsky M."/>
            <person name="Klenk H.-P."/>
            <person name="Fraser C.M."/>
            <person name="Smith H.O."/>
            <person name="Woese C.R."/>
            <person name="Venter J.C."/>
        </authorList>
    </citation>
    <scope>NUCLEOTIDE SEQUENCE [LARGE SCALE GENOMIC DNA]</scope>
    <source>
        <strain>ATCC 43067 / DSM 2661 / JAL-1 / JCM 10045 / NBRC 100440</strain>
    </source>
</reference>
<proteinExistence type="evidence at protein level"/>
<accession>Q58193</accession>
<keyword id="KW-0002">3D-structure</keyword>
<keyword id="KW-1185">Reference proteome</keyword>
<gene>
    <name type="ordered locus">MJ0783</name>
</gene>